<feature type="chain" id="PRO_1000134802" description="Transcriptional regulator MraZ">
    <location>
        <begin position="1"/>
        <end position="143"/>
    </location>
</feature>
<feature type="domain" description="SpoVT-AbrB 1" evidence="2">
    <location>
        <begin position="5"/>
        <end position="47"/>
    </location>
</feature>
<feature type="domain" description="SpoVT-AbrB 2" evidence="2">
    <location>
        <begin position="76"/>
        <end position="119"/>
    </location>
</feature>
<proteinExistence type="inferred from homology"/>
<gene>
    <name evidence="1" type="primary">mraZ</name>
    <name type="ordered locus">Helmi_19820</name>
    <name type="ORF">HM1_2050</name>
</gene>
<name>MRAZ_HELMI</name>
<comment type="subunit">
    <text evidence="1">Forms oligomers.</text>
</comment>
<comment type="subcellular location">
    <subcellularLocation>
        <location evidence="1">Cytoplasm</location>
        <location evidence="1">Nucleoid</location>
    </subcellularLocation>
</comment>
<comment type="similarity">
    <text evidence="1">Belongs to the MraZ family.</text>
</comment>
<dbReference type="EMBL" id="CP000930">
    <property type="protein sequence ID" value="ABZ84607.1"/>
    <property type="molecule type" value="Genomic_DNA"/>
</dbReference>
<dbReference type="RefSeq" id="WP_012283107.1">
    <property type="nucleotide sequence ID" value="NC_010337.2"/>
</dbReference>
<dbReference type="SMR" id="B0TGB1"/>
<dbReference type="STRING" id="498761.HM1_2050"/>
<dbReference type="KEGG" id="hmo:HM1_2050"/>
<dbReference type="eggNOG" id="COG2001">
    <property type="taxonomic scope" value="Bacteria"/>
</dbReference>
<dbReference type="HOGENOM" id="CLU_107907_0_5_9"/>
<dbReference type="OrthoDB" id="9807753at2"/>
<dbReference type="Proteomes" id="UP000008550">
    <property type="component" value="Chromosome"/>
</dbReference>
<dbReference type="GO" id="GO:0005737">
    <property type="term" value="C:cytoplasm"/>
    <property type="evidence" value="ECO:0007669"/>
    <property type="project" value="UniProtKB-UniRule"/>
</dbReference>
<dbReference type="GO" id="GO:0009295">
    <property type="term" value="C:nucleoid"/>
    <property type="evidence" value="ECO:0007669"/>
    <property type="project" value="UniProtKB-SubCell"/>
</dbReference>
<dbReference type="GO" id="GO:0003700">
    <property type="term" value="F:DNA-binding transcription factor activity"/>
    <property type="evidence" value="ECO:0007669"/>
    <property type="project" value="UniProtKB-UniRule"/>
</dbReference>
<dbReference type="GO" id="GO:0000976">
    <property type="term" value="F:transcription cis-regulatory region binding"/>
    <property type="evidence" value="ECO:0007669"/>
    <property type="project" value="TreeGrafter"/>
</dbReference>
<dbReference type="GO" id="GO:2000143">
    <property type="term" value="P:negative regulation of DNA-templated transcription initiation"/>
    <property type="evidence" value="ECO:0007669"/>
    <property type="project" value="TreeGrafter"/>
</dbReference>
<dbReference type="CDD" id="cd16321">
    <property type="entry name" value="MraZ_C"/>
    <property type="match status" value="1"/>
</dbReference>
<dbReference type="CDD" id="cd16320">
    <property type="entry name" value="MraZ_N"/>
    <property type="match status" value="1"/>
</dbReference>
<dbReference type="FunFam" id="3.40.1550.20:FF:000002">
    <property type="entry name" value="Transcriptional regulator MraZ"/>
    <property type="match status" value="1"/>
</dbReference>
<dbReference type="Gene3D" id="3.40.1550.20">
    <property type="entry name" value="Transcriptional regulator MraZ domain"/>
    <property type="match status" value="1"/>
</dbReference>
<dbReference type="HAMAP" id="MF_01008">
    <property type="entry name" value="MraZ"/>
    <property type="match status" value="1"/>
</dbReference>
<dbReference type="InterPro" id="IPR003444">
    <property type="entry name" value="MraZ"/>
</dbReference>
<dbReference type="InterPro" id="IPR035644">
    <property type="entry name" value="MraZ_C"/>
</dbReference>
<dbReference type="InterPro" id="IPR020603">
    <property type="entry name" value="MraZ_dom"/>
</dbReference>
<dbReference type="InterPro" id="IPR035642">
    <property type="entry name" value="MraZ_N"/>
</dbReference>
<dbReference type="InterPro" id="IPR038619">
    <property type="entry name" value="MraZ_sf"/>
</dbReference>
<dbReference type="InterPro" id="IPR007159">
    <property type="entry name" value="SpoVT-AbrB_dom"/>
</dbReference>
<dbReference type="InterPro" id="IPR037914">
    <property type="entry name" value="SpoVT-AbrB_sf"/>
</dbReference>
<dbReference type="NCBIfam" id="TIGR00242">
    <property type="entry name" value="division/cell wall cluster transcriptional repressor MraZ"/>
    <property type="match status" value="1"/>
</dbReference>
<dbReference type="PANTHER" id="PTHR34701">
    <property type="entry name" value="TRANSCRIPTIONAL REGULATOR MRAZ"/>
    <property type="match status" value="1"/>
</dbReference>
<dbReference type="PANTHER" id="PTHR34701:SF1">
    <property type="entry name" value="TRANSCRIPTIONAL REGULATOR MRAZ"/>
    <property type="match status" value="1"/>
</dbReference>
<dbReference type="Pfam" id="PF02381">
    <property type="entry name" value="MraZ"/>
    <property type="match status" value="2"/>
</dbReference>
<dbReference type="SUPFAM" id="SSF89447">
    <property type="entry name" value="AbrB/MazE/MraZ-like"/>
    <property type="match status" value="1"/>
</dbReference>
<dbReference type="PROSITE" id="PS51740">
    <property type="entry name" value="SPOVT_ABRB"/>
    <property type="match status" value="2"/>
</dbReference>
<accession>B0TGB1</accession>
<reference key="1">
    <citation type="journal article" date="2008" name="J. Bacteriol.">
        <title>The genome of Heliobacterium modesticaldum, a phototrophic representative of the Firmicutes containing the simplest photosynthetic apparatus.</title>
        <authorList>
            <person name="Sattley W.M."/>
            <person name="Madigan M.T."/>
            <person name="Swingley W.D."/>
            <person name="Cheung P.C."/>
            <person name="Clocksin K.M."/>
            <person name="Conrad A.L."/>
            <person name="Dejesa L.C."/>
            <person name="Honchak B.M."/>
            <person name="Jung D.O."/>
            <person name="Karbach L.E."/>
            <person name="Kurdoglu A."/>
            <person name="Lahiri S."/>
            <person name="Mastrian S.D."/>
            <person name="Page L.E."/>
            <person name="Taylor H.L."/>
            <person name="Wang Z.T."/>
            <person name="Raymond J."/>
            <person name="Chen M."/>
            <person name="Blankenship R.E."/>
            <person name="Touchman J.W."/>
        </authorList>
    </citation>
    <scope>NUCLEOTIDE SEQUENCE [LARGE SCALE GENOMIC DNA]</scope>
    <source>
        <strain>ATCC 51547 / Ice1</strain>
    </source>
</reference>
<organism>
    <name type="scientific">Heliobacterium modesticaldum (strain ATCC 51547 / Ice1)</name>
    <dbReference type="NCBI Taxonomy" id="498761"/>
    <lineage>
        <taxon>Bacteria</taxon>
        <taxon>Bacillati</taxon>
        <taxon>Bacillota</taxon>
        <taxon>Clostridia</taxon>
        <taxon>Eubacteriales</taxon>
        <taxon>Heliobacteriaceae</taxon>
        <taxon>Heliomicrobium</taxon>
    </lineage>
</organism>
<evidence type="ECO:0000255" key="1">
    <source>
        <dbReference type="HAMAP-Rule" id="MF_01008"/>
    </source>
</evidence>
<evidence type="ECO:0000255" key="2">
    <source>
        <dbReference type="PROSITE-ProRule" id="PRU01076"/>
    </source>
</evidence>
<sequence length="143" mass="16438">MFMGEYQHAIDPKGRLFMPARLRESLGEAFVATKGLDGCLFVYPKEEWKRLEEKLKALPFTRADARAFQRFFFSGAGECEVDKQGRILVPAHLREHAALEKDVVIIGAGARVEIWSRERWSKYNEKAAPSYEEVAEKLIDFDL</sequence>
<protein>
    <recommendedName>
        <fullName>Transcriptional regulator MraZ</fullName>
    </recommendedName>
</protein>
<keyword id="KW-0963">Cytoplasm</keyword>
<keyword id="KW-0238">DNA-binding</keyword>
<keyword id="KW-1185">Reference proteome</keyword>
<keyword id="KW-0677">Repeat</keyword>
<keyword id="KW-0804">Transcription</keyword>
<keyword id="KW-0805">Transcription regulation</keyword>